<protein>
    <recommendedName>
        <fullName>Uncharacterized protein YqkB</fullName>
    </recommendedName>
</protein>
<name>YQKB_BACSU</name>
<feature type="chain" id="PRO_0000049839" description="Uncharacterized protein YqkB">
    <location>
        <begin position="1"/>
        <end position="107"/>
    </location>
</feature>
<gene>
    <name type="primary">yqkB</name>
    <name type="ordered locus">BSU23660</name>
</gene>
<proteinExistence type="predicted"/>
<keyword id="KW-1185">Reference proteome</keyword>
<reference key="1">
    <citation type="journal article" date="1996" name="Microbiology">
        <title>Systematic sequencing of the 283 kb 210 degrees-232 degrees region of the Bacillus subtilis genome containing the skin element and many sporulation genes.</title>
        <authorList>
            <person name="Mizuno M."/>
            <person name="Masuda S."/>
            <person name="Takemaru K."/>
            <person name="Hosono S."/>
            <person name="Sato T."/>
            <person name="Takeuchi M."/>
            <person name="Kobayashi Y."/>
        </authorList>
    </citation>
    <scope>NUCLEOTIDE SEQUENCE [GENOMIC DNA]</scope>
    <source>
        <strain>168 / JH642</strain>
    </source>
</reference>
<reference key="2">
    <citation type="journal article" date="1997" name="Nature">
        <title>The complete genome sequence of the Gram-positive bacterium Bacillus subtilis.</title>
        <authorList>
            <person name="Kunst F."/>
            <person name="Ogasawara N."/>
            <person name="Moszer I."/>
            <person name="Albertini A.M."/>
            <person name="Alloni G."/>
            <person name="Azevedo V."/>
            <person name="Bertero M.G."/>
            <person name="Bessieres P."/>
            <person name="Bolotin A."/>
            <person name="Borchert S."/>
            <person name="Borriss R."/>
            <person name="Boursier L."/>
            <person name="Brans A."/>
            <person name="Braun M."/>
            <person name="Brignell S.C."/>
            <person name="Bron S."/>
            <person name="Brouillet S."/>
            <person name="Bruschi C.V."/>
            <person name="Caldwell B."/>
            <person name="Capuano V."/>
            <person name="Carter N.M."/>
            <person name="Choi S.-K."/>
            <person name="Codani J.-J."/>
            <person name="Connerton I.F."/>
            <person name="Cummings N.J."/>
            <person name="Daniel R.A."/>
            <person name="Denizot F."/>
            <person name="Devine K.M."/>
            <person name="Duesterhoeft A."/>
            <person name="Ehrlich S.D."/>
            <person name="Emmerson P.T."/>
            <person name="Entian K.-D."/>
            <person name="Errington J."/>
            <person name="Fabret C."/>
            <person name="Ferrari E."/>
            <person name="Foulger D."/>
            <person name="Fritz C."/>
            <person name="Fujita M."/>
            <person name="Fujita Y."/>
            <person name="Fuma S."/>
            <person name="Galizzi A."/>
            <person name="Galleron N."/>
            <person name="Ghim S.-Y."/>
            <person name="Glaser P."/>
            <person name="Goffeau A."/>
            <person name="Golightly E.J."/>
            <person name="Grandi G."/>
            <person name="Guiseppi G."/>
            <person name="Guy B.J."/>
            <person name="Haga K."/>
            <person name="Haiech J."/>
            <person name="Harwood C.R."/>
            <person name="Henaut A."/>
            <person name="Hilbert H."/>
            <person name="Holsappel S."/>
            <person name="Hosono S."/>
            <person name="Hullo M.-F."/>
            <person name="Itaya M."/>
            <person name="Jones L.-M."/>
            <person name="Joris B."/>
            <person name="Karamata D."/>
            <person name="Kasahara Y."/>
            <person name="Klaerr-Blanchard M."/>
            <person name="Klein C."/>
            <person name="Kobayashi Y."/>
            <person name="Koetter P."/>
            <person name="Koningstein G."/>
            <person name="Krogh S."/>
            <person name="Kumano M."/>
            <person name="Kurita K."/>
            <person name="Lapidus A."/>
            <person name="Lardinois S."/>
            <person name="Lauber J."/>
            <person name="Lazarevic V."/>
            <person name="Lee S.-M."/>
            <person name="Levine A."/>
            <person name="Liu H."/>
            <person name="Masuda S."/>
            <person name="Mauel C."/>
            <person name="Medigue C."/>
            <person name="Medina N."/>
            <person name="Mellado R.P."/>
            <person name="Mizuno M."/>
            <person name="Moestl D."/>
            <person name="Nakai S."/>
            <person name="Noback M."/>
            <person name="Noone D."/>
            <person name="O'Reilly M."/>
            <person name="Ogawa K."/>
            <person name="Ogiwara A."/>
            <person name="Oudega B."/>
            <person name="Park S.-H."/>
            <person name="Parro V."/>
            <person name="Pohl T.M."/>
            <person name="Portetelle D."/>
            <person name="Porwollik S."/>
            <person name="Prescott A.M."/>
            <person name="Presecan E."/>
            <person name="Pujic P."/>
            <person name="Purnelle B."/>
            <person name="Rapoport G."/>
            <person name="Rey M."/>
            <person name="Reynolds S."/>
            <person name="Rieger M."/>
            <person name="Rivolta C."/>
            <person name="Rocha E."/>
            <person name="Roche B."/>
            <person name="Rose M."/>
            <person name="Sadaie Y."/>
            <person name="Sato T."/>
            <person name="Scanlan E."/>
            <person name="Schleich S."/>
            <person name="Schroeter R."/>
            <person name="Scoffone F."/>
            <person name="Sekiguchi J."/>
            <person name="Sekowska A."/>
            <person name="Seror S.J."/>
            <person name="Serror P."/>
            <person name="Shin B.-S."/>
            <person name="Soldo B."/>
            <person name="Sorokin A."/>
            <person name="Tacconi E."/>
            <person name="Takagi T."/>
            <person name="Takahashi H."/>
            <person name="Takemaru K."/>
            <person name="Takeuchi M."/>
            <person name="Tamakoshi A."/>
            <person name="Tanaka T."/>
            <person name="Terpstra P."/>
            <person name="Tognoni A."/>
            <person name="Tosato V."/>
            <person name="Uchiyama S."/>
            <person name="Vandenbol M."/>
            <person name="Vannier F."/>
            <person name="Vassarotti A."/>
            <person name="Viari A."/>
            <person name="Wambutt R."/>
            <person name="Wedler E."/>
            <person name="Wedler H."/>
            <person name="Weitzenegger T."/>
            <person name="Winters P."/>
            <person name="Wipat A."/>
            <person name="Yamamoto H."/>
            <person name="Yamane K."/>
            <person name="Yasumoto K."/>
            <person name="Yata K."/>
            <person name="Yoshida K."/>
            <person name="Yoshikawa H.-F."/>
            <person name="Zumstein E."/>
            <person name="Yoshikawa H."/>
            <person name="Danchin A."/>
        </authorList>
    </citation>
    <scope>NUCLEOTIDE SEQUENCE [LARGE SCALE GENOMIC DNA]</scope>
    <source>
        <strain>168</strain>
    </source>
</reference>
<sequence length="107" mass="11764">MNIHVTDAAKQALQQAFDANPGKKAQLRYDAEGCGCAVSGVPTIWLAEELTGQCEQLETNGIPLYIQSSQKVFFDDQMTIDYNEKAKTLALKSPAEMLSPRMSILVK</sequence>
<accession>P54565</accession>
<dbReference type="EMBL" id="D84432">
    <property type="protein sequence ID" value="BAA12634.1"/>
    <property type="molecule type" value="Genomic_DNA"/>
</dbReference>
<dbReference type="EMBL" id="AL009126">
    <property type="protein sequence ID" value="CAB14298.1"/>
    <property type="molecule type" value="Genomic_DNA"/>
</dbReference>
<dbReference type="PIR" id="D69966">
    <property type="entry name" value="D69966"/>
</dbReference>
<dbReference type="RefSeq" id="NP_390247.1">
    <property type="nucleotide sequence ID" value="NC_000964.3"/>
</dbReference>
<dbReference type="RefSeq" id="WP_003226552.1">
    <property type="nucleotide sequence ID" value="NZ_OZ025638.1"/>
</dbReference>
<dbReference type="SMR" id="P54565"/>
<dbReference type="FunCoup" id="P54565">
    <property type="interactions" value="16"/>
</dbReference>
<dbReference type="STRING" id="224308.BSU23660"/>
<dbReference type="PaxDb" id="224308-BSU23660"/>
<dbReference type="EnsemblBacteria" id="CAB14298">
    <property type="protein sequence ID" value="CAB14298"/>
    <property type="gene ID" value="BSU_23660"/>
</dbReference>
<dbReference type="GeneID" id="938713"/>
<dbReference type="KEGG" id="bsu:BSU23660"/>
<dbReference type="PATRIC" id="fig|224308.179.peg.2579"/>
<dbReference type="eggNOG" id="COG4918">
    <property type="taxonomic scope" value="Bacteria"/>
</dbReference>
<dbReference type="InParanoid" id="P54565"/>
<dbReference type="OrthoDB" id="2361087at2"/>
<dbReference type="PhylomeDB" id="P54565"/>
<dbReference type="BioCyc" id="BSUB:BSU23660-MONOMER"/>
<dbReference type="PRO" id="PR:P54565"/>
<dbReference type="Proteomes" id="UP000001570">
    <property type="component" value="Chromosome"/>
</dbReference>
<dbReference type="Gene3D" id="2.60.300.12">
    <property type="entry name" value="HesB-like domain"/>
    <property type="match status" value="1"/>
</dbReference>
<dbReference type="InterPro" id="IPR000361">
    <property type="entry name" value="FeS_biogenesis"/>
</dbReference>
<dbReference type="InterPro" id="IPR035903">
    <property type="entry name" value="HesB-like_dom_sf"/>
</dbReference>
<dbReference type="Pfam" id="PF01521">
    <property type="entry name" value="Fe-S_biosyn"/>
    <property type="match status" value="1"/>
</dbReference>
<dbReference type="SUPFAM" id="SSF89360">
    <property type="entry name" value="HesB-like domain"/>
    <property type="match status" value="1"/>
</dbReference>
<organism>
    <name type="scientific">Bacillus subtilis (strain 168)</name>
    <dbReference type="NCBI Taxonomy" id="224308"/>
    <lineage>
        <taxon>Bacteria</taxon>
        <taxon>Bacillati</taxon>
        <taxon>Bacillota</taxon>
        <taxon>Bacilli</taxon>
        <taxon>Bacillales</taxon>
        <taxon>Bacillaceae</taxon>
        <taxon>Bacillus</taxon>
    </lineage>
</organism>